<sequence>MSKSSDRINLTNQFLIAMPNMADPTFSGTVVYLCDHSERGALGLVINRPTDIDLESLFNRIDLKLEIEPLLHIPVYFGGPVQTERGFVLHEPVEGSAYNSSMTVEGGLEMTTSKDVLEAVATGTGPKRFLLTLGHAGWGAGQLEEEISKNGWLTVAADPRIVFDTPAEERFEAALGLLGVSSSMLSGEAGHA</sequence>
<gene>
    <name type="ordered locus">BURPS668_3112</name>
</gene>
<reference key="1">
    <citation type="journal article" date="2010" name="Genome Biol. Evol.">
        <title>Continuing evolution of Burkholderia mallei through genome reduction and large-scale rearrangements.</title>
        <authorList>
            <person name="Losada L."/>
            <person name="Ronning C.M."/>
            <person name="DeShazer D."/>
            <person name="Woods D."/>
            <person name="Fedorova N."/>
            <person name="Kim H.S."/>
            <person name="Shabalina S.A."/>
            <person name="Pearson T.R."/>
            <person name="Brinkac L."/>
            <person name="Tan P."/>
            <person name="Nandi T."/>
            <person name="Crabtree J."/>
            <person name="Badger J."/>
            <person name="Beckstrom-Sternberg S."/>
            <person name="Saqib M."/>
            <person name="Schutzer S.E."/>
            <person name="Keim P."/>
            <person name="Nierman W.C."/>
        </authorList>
    </citation>
    <scope>NUCLEOTIDE SEQUENCE [LARGE SCALE GENOMIC DNA]</scope>
    <source>
        <strain>668</strain>
    </source>
</reference>
<protein>
    <recommendedName>
        <fullName evidence="1">UPF0301 protein BURPS668_3112</fullName>
    </recommendedName>
</protein>
<comment type="similarity">
    <text evidence="1">Belongs to the UPF0301 (AlgH) family.</text>
</comment>
<organism>
    <name type="scientific">Burkholderia pseudomallei (strain 668)</name>
    <dbReference type="NCBI Taxonomy" id="320373"/>
    <lineage>
        <taxon>Bacteria</taxon>
        <taxon>Pseudomonadati</taxon>
        <taxon>Pseudomonadota</taxon>
        <taxon>Betaproteobacteria</taxon>
        <taxon>Burkholderiales</taxon>
        <taxon>Burkholderiaceae</taxon>
        <taxon>Burkholderia</taxon>
        <taxon>pseudomallei group</taxon>
    </lineage>
</organism>
<feature type="chain" id="PRO_1000046649" description="UPF0301 protein BURPS668_3112">
    <location>
        <begin position="1"/>
        <end position="192"/>
    </location>
</feature>
<proteinExistence type="inferred from homology"/>
<evidence type="ECO:0000255" key="1">
    <source>
        <dbReference type="HAMAP-Rule" id="MF_00758"/>
    </source>
</evidence>
<accession>A3NCQ3</accession>
<dbReference type="EMBL" id="CP000570">
    <property type="protein sequence ID" value="ABN81865.1"/>
    <property type="molecule type" value="Genomic_DNA"/>
</dbReference>
<dbReference type="RefSeq" id="WP_004185441.1">
    <property type="nucleotide sequence ID" value="NC_009074.1"/>
</dbReference>
<dbReference type="SMR" id="A3NCQ3"/>
<dbReference type="KEGG" id="bpd:BURPS668_3112"/>
<dbReference type="HOGENOM" id="CLU_057596_1_0_4"/>
<dbReference type="GO" id="GO:0005829">
    <property type="term" value="C:cytosol"/>
    <property type="evidence" value="ECO:0007669"/>
    <property type="project" value="TreeGrafter"/>
</dbReference>
<dbReference type="Gene3D" id="3.40.1740.10">
    <property type="entry name" value="VC0467-like"/>
    <property type="match status" value="1"/>
</dbReference>
<dbReference type="HAMAP" id="MF_00758">
    <property type="entry name" value="UPF0301"/>
    <property type="match status" value="1"/>
</dbReference>
<dbReference type="InterPro" id="IPR003774">
    <property type="entry name" value="AlgH-like"/>
</dbReference>
<dbReference type="NCBIfam" id="NF001266">
    <property type="entry name" value="PRK00228.1-1"/>
    <property type="match status" value="1"/>
</dbReference>
<dbReference type="NCBIfam" id="NF001267">
    <property type="entry name" value="PRK00228.1-2"/>
    <property type="match status" value="1"/>
</dbReference>
<dbReference type="PANTHER" id="PTHR30327">
    <property type="entry name" value="UNCHARACTERIZED PROTEIN YQGE"/>
    <property type="match status" value="1"/>
</dbReference>
<dbReference type="PANTHER" id="PTHR30327:SF1">
    <property type="entry name" value="UPF0301 PROTEIN YQGE"/>
    <property type="match status" value="1"/>
</dbReference>
<dbReference type="Pfam" id="PF02622">
    <property type="entry name" value="DUF179"/>
    <property type="match status" value="1"/>
</dbReference>
<dbReference type="SUPFAM" id="SSF143456">
    <property type="entry name" value="VC0467-like"/>
    <property type="match status" value="1"/>
</dbReference>
<name>Y3112_BURP6</name>